<comment type="function">
    <text evidence="1">Catalyzes the reversible adenylation of nicotinate mononucleotide (NaMN) to nicotinic acid adenine dinucleotide (NaAD).</text>
</comment>
<comment type="catalytic activity">
    <reaction evidence="1">
        <text>nicotinate beta-D-ribonucleotide + ATP + H(+) = deamido-NAD(+) + diphosphate</text>
        <dbReference type="Rhea" id="RHEA:22860"/>
        <dbReference type="ChEBI" id="CHEBI:15378"/>
        <dbReference type="ChEBI" id="CHEBI:30616"/>
        <dbReference type="ChEBI" id="CHEBI:33019"/>
        <dbReference type="ChEBI" id="CHEBI:57502"/>
        <dbReference type="ChEBI" id="CHEBI:58437"/>
        <dbReference type="EC" id="2.7.7.18"/>
    </reaction>
</comment>
<comment type="pathway">
    <text evidence="1">Cofactor biosynthesis; NAD(+) biosynthesis; deamido-NAD(+) from nicotinate D-ribonucleotide: step 1/1.</text>
</comment>
<comment type="similarity">
    <text evidence="1">Belongs to the NadD family.</text>
</comment>
<proteinExistence type="inferred from homology"/>
<name>NADD_PSEPK</name>
<accession>Q88DL5</accession>
<organism>
    <name type="scientific">Pseudomonas putida (strain ATCC 47054 / DSM 6125 / CFBP 8728 / NCIMB 11950 / KT2440)</name>
    <dbReference type="NCBI Taxonomy" id="160488"/>
    <lineage>
        <taxon>Bacteria</taxon>
        <taxon>Pseudomonadati</taxon>
        <taxon>Pseudomonadota</taxon>
        <taxon>Gammaproteobacteria</taxon>
        <taxon>Pseudomonadales</taxon>
        <taxon>Pseudomonadaceae</taxon>
        <taxon>Pseudomonas</taxon>
    </lineage>
</organism>
<dbReference type="EC" id="2.7.7.18" evidence="1"/>
<dbReference type="EMBL" id="AE015451">
    <property type="protein sequence ID" value="AAN70379.1"/>
    <property type="molecule type" value="Genomic_DNA"/>
</dbReference>
<dbReference type="RefSeq" id="NP_746915.1">
    <property type="nucleotide sequence ID" value="NC_002947.4"/>
</dbReference>
<dbReference type="RefSeq" id="WP_010955423.1">
    <property type="nucleotide sequence ID" value="NZ_CP169744.1"/>
</dbReference>
<dbReference type="SMR" id="Q88DL5"/>
<dbReference type="STRING" id="160488.PP_4810"/>
<dbReference type="PaxDb" id="160488-PP_4810"/>
<dbReference type="GeneID" id="83682536"/>
<dbReference type="KEGG" id="ppu:PP_4810"/>
<dbReference type="PATRIC" id="fig|160488.4.peg.5133"/>
<dbReference type="eggNOG" id="COG1057">
    <property type="taxonomic scope" value="Bacteria"/>
</dbReference>
<dbReference type="HOGENOM" id="CLU_069765_0_0_6"/>
<dbReference type="OrthoDB" id="5295945at2"/>
<dbReference type="PhylomeDB" id="Q88DL5"/>
<dbReference type="BioCyc" id="PPUT160488:G1G01-5147-MONOMER"/>
<dbReference type="UniPathway" id="UPA00253">
    <property type="reaction ID" value="UER00332"/>
</dbReference>
<dbReference type="Proteomes" id="UP000000556">
    <property type="component" value="Chromosome"/>
</dbReference>
<dbReference type="GO" id="GO:0005524">
    <property type="term" value="F:ATP binding"/>
    <property type="evidence" value="ECO:0007669"/>
    <property type="project" value="UniProtKB-KW"/>
</dbReference>
<dbReference type="GO" id="GO:0004515">
    <property type="term" value="F:nicotinate-nucleotide adenylyltransferase activity"/>
    <property type="evidence" value="ECO:0007669"/>
    <property type="project" value="UniProtKB-UniRule"/>
</dbReference>
<dbReference type="GO" id="GO:0009435">
    <property type="term" value="P:NAD biosynthetic process"/>
    <property type="evidence" value="ECO:0007669"/>
    <property type="project" value="UniProtKB-UniRule"/>
</dbReference>
<dbReference type="CDD" id="cd02165">
    <property type="entry name" value="NMNAT"/>
    <property type="match status" value="1"/>
</dbReference>
<dbReference type="Gene3D" id="3.40.50.620">
    <property type="entry name" value="HUPs"/>
    <property type="match status" value="1"/>
</dbReference>
<dbReference type="HAMAP" id="MF_00244">
    <property type="entry name" value="NaMN_adenylyltr"/>
    <property type="match status" value="1"/>
</dbReference>
<dbReference type="InterPro" id="IPR004821">
    <property type="entry name" value="Cyt_trans-like"/>
</dbReference>
<dbReference type="InterPro" id="IPR005248">
    <property type="entry name" value="NadD/NMNAT"/>
</dbReference>
<dbReference type="InterPro" id="IPR014729">
    <property type="entry name" value="Rossmann-like_a/b/a_fold"/>
</dbReference>
<dbReference type="NCBIfam" id="TIGR00125">
    <property type="entry name" value="cyt_tran_rel"/>
    <property type="match status" value="1"/>
</dbReference>
<dbReference type="NCBIfam" id="TIGR00482">
    <property type="entry name" value="nicotinate (nicotinamide) nucleotide adenylyltransferase"/>
    <property type="match status" value="1"/>
</dbReference>
<dbReference type="NCBIfam" id="NF000839">
    <property type="entry name" value="PRK00071.1-1"/>
    <property type="match status" value="1"/>
</dbReference>
<dbReference type="NCBIfam" id="NF000840">
    <property type="entry name" value="PRK00071.1-3"/>
    <property type="match status" value="1"/>
</dbReference>
<dbReference type="PANTHER" id="PTHR39321">
    <property type="entry name" value="NICOTINATE-NUCLEOTIDE ADENYLYLTRANSFERASE-RELATED"/>
    <property type="match status" value="1"/>
</dbReference>
<dbReference type="PANTHER" id="PTHR39321:SF3">
    <property type="entry name" value="PHOSPHOPANTETHEINE ADENYLYLTRANSFERASE"/>
    <property type="match status" value="1"/>
</dbReference>
<dbReference type="Pfam" id="PF01467">
    <property type="entry name" value="CTP_transf_like"/>
    <property type="match status" value="1"/>
</dbReference>
<dbReference type="SUPFAM" id="SSF52374">
    <property type="entry name" value="Nucleotidylyl transferase"/>
    <property type="match status" value="1"/>
</dbReference>
<feature type="chain" id="PRO_0000181433" description="Probable nicotinate-nucleotide adenylyltransferase">
    <location>
        <begin position="1"/>
        <end position="230"/>
    </location>
</feature>
<sequence>MASCAARGPAELSKAQAVRRIGILGGTFDPVHIGHLRSALEVAEFMGLDELRLLPNARPPHRDTPQVAAQDRLAMVREAVQGVACLSVDARELERDKPSYTIDTLESIRAELSGHDQLFLVLGWDAFCGLPAWHRWEELLQHCHILVLQRPDADVEPPDELRNLLAARSESDPTAMSGPAGNISFVWQTPLAVSATQIRQLLASGKSVRFLVPDAVLAYIEAHELYRAPN</sequence>
<gene>
    <name evidence="1" type="primary">nadD</name>
    <name type="ordered locus">PP_4810</name>
</gene>
<protein>
    <recommendedName>
        <fullName evidence="1">Probable nicotinate-nucleotide adenylyltransferase</fullName>
        <ecNumber evidence="1">2.7.7.18</ecNumber>
    </recommendedName>
    <alternativeName>
        <fullName evidence="1">Deamido-NAD(+) diphosphorylase</fullName>
    </alternativeName>
    <alternativeName>
        <fullName evidence="1">Deamido-NAD(+) pyrophosphorylase</fullName>
    </alternativeName>
    <alternativeName>
        <fullName evidence="1">Nicotinate mononucleotide adenylyltransferase</fullName>
        <shortName evidence="1">NaMN adenylyltransferase</shortName>
    </alternativeName>
</protein>
<evidence type="ECO:0000255" key="1">
    <source>
        <dbReference type="HAMAP-Rule" id="MF_00244"/>
    </source>
</evidence>
<keyword id="KW-0067">ATP-binding</keyword>
<keyword id="KW-0520">NAD</keyword>
<keyword id="KW-0547">Nucleotide-binding</keyword>
<keyword id="KW-0548">Nucleotidyltransferase</keyword>
<keyword id="KW-0662">Pyridine nucleotide biosynthesis</keyword>
<keyword id="KW-1185">Reference proteome</keyword>
<keyword id="KW-0808">Transferase</keyword>
<reference key="1">
    <citation type="journal article" date="2002" name="Environ. Microbiol.">
        <title>Complete genome sequence and comparative analysis of the metabolically versatile Pseudomonas putida KT2440.</title>
        <authorList>
            <person name="Nelson K.E."/>
            <person name="Weinel C."/>
            <person name="Paulsen I.T."/>
            <person name="Dodson R.J."/>
            <person name="Hilbert H."/>
            <person name="Martins dos Santos V.A.P."/>
            <person name="Fouts D.E."/>
            <person name="Gill S.R."/>
            <person name="Pop M."/>
            <person name="Holmes M."/>
            <person name="Brinkac L.M."/>
            <person name="Beanan M.J."/>
            <person name="DeBoy R.T."/>
            <person name="Daugherty S.C."/>
            <person name="Kolonay J.F."/>
            <person name="Madupu R."/>
            <person name="Nelson W.C."/>
            <person name="White O."/>
            <person name="Peterson J.D."/>
            <person name="Khouri H.M."/>
            <person name="Hance I."/>
            <person name="Chris Lee P."/>
            <person name="Holtzapple E.K."/>
            <person name="Scanlan D."/>
            <person name="Tran K."/>
            <person name="Moazzez A."/>
            <person name="Utterback T.R."/>
            <person name="Rizzo M."/>
            <person name="Lee K."/>
            <person name="Kosack D."/>
            <person name="Moestl D."/>
            <person name="Wedler H."/>
            <person name="Lauber J."/>
            <person name="Stjepandic D."/>
            <person name="Hoheisel J."/>
            <person name="Straetz M."/>
            <person name="Heim S."/>
            <person name="Kiewitz C."/>
            <person name="Eisen J.A."/>
            <person name="Timmis K.N."/>
            <person name="Duesterhoeft A."/>
            <person name="Tuemmler B."/>
            <person name="Fraser C.M."/>
        </authorList>
    </citation>
    <scope>NUCLEOTIDE SEQUENCE [LARGE SCALE GENOMIC DNA]</scope>
    <source>
        <strain>ATCC 47054 / DSM 6125 / CFBP 8728 / NCIMB 11950 / KT2440</strain>
    </source>
</reference>